<protein>
    <recommendedName>
        <fullName evidence="1">tRNA uridine 5-carboxymethylaminomethyl modification enzyme MnmG</fullName>
    </recommendedName>
    <alternativeName>
        <fullName evidence="1">Glucose-inhibited division protein A</fullName>
    </alternativeName>
</protein>
<accession>B1H0R2</accession>
<feature type="chain" id="PRO_0000345357" description="tRNA uridine 5-carboxymethylaminomethyl modification enzyme MnmG">
    <location>
        <begin position="1"/>
        <end position="597"/>
    </location>
</feature>
<feature type="binding site" evidence="1">
    <location>
        <begin position="11"/>
        <end position="16"/>
    </location>
    <ligand>
        <name>FAD</name>
        <dbReference type="ChEBI" id="CHEBI:57692"/>
    </ligand>
</feature>
<feature type="binding site" evidence="1">
    <location>
        <begin position="275"/>
        <end position="289"/>
    </location>
    <ligand>
        <name>NAD(+)</name>
        <dbReference type="ChEBI" id="CHEBI:57540"/>
    </ligand>
</feature>
<organism>
    <name type="scientific">Endomicrobium trichonymphae</name>
    <dbReference type="NCBI Taxonomy" id="1408204"/>
    <lineage>
        <taxon>Bacteria</taxon>
        <taxon>Pseudomonadati</taxon>
        <taxon>Elusimicrobiota</taxon>
        <taxon>Endomicrobiia</taxon>
        <taxon>Endomicrobiales</taxon>
        <taxon>Endomicrobiaceae</taxon>
        <taxon>Candidatus Endomicrobiellum</taxon>
    </lineage>
</organism>
<name>MNMG_ENDTX</name>
<gene>
    <name evidence="1" type="primary">mnmG</name>
    <name evidence="1" type="synonym">gidA</name>
    <name type="ordered locus">TGRD_611</name>
</gene>
<reference key="1">
    <citation type="journal article" date="2008" name="Proc. Natl. Acad. Sci. U.S.A.">
        <title>Complete genome of the uncultured termite group 1 bacteria in a single host protist cell.</title>
        <authorList>
            <person name="Hongoh Y."/>
            <person name="Sharma V.K."/>
            <person name="Prakash T."/>
            <person name="Noda S."/>
            <person name="Taylor T.D."/>
            <person name="Kudo T."/>
            <person name="Sakaki Y."/>
            <person name="Toyoda A."/>
            <person name="Hattori M."/>
            <person name="Ohkuma M."/>
        </authorList>
    </citation>
    <scope>NUCLEOTIDE SEQUENCE [LARGE SCALE GENOMIC DNA]</scope>
</reference>
<comment type="function">
    <text evidence="1">NAD-binding protein involved in the addition of a carboxymethylaminomethyl (cmnm) group at the wobble position (U34) of certain tRNAs, forming tRNA-cmnm(5)s(2)U34.</text>
</comment>
<comment type="cofactor">
    <cofactor evidence="1">
        <name>FAD</name>
        <dbReference type="ChEBI" id="CHEBI:57692"/>
    </cofactor>
</comment>
<comment type="subunit">
    <text evidence="1">Homodimer. Heterotetramer of two MnmE and two MnmG subunits.</text>
</comment>
<comment type="subcellular location">
    <subcellularLocation>
        <location evidence="1">Cytoplasm</location>
    </subcellularLocation>
</comment>
<comment type="similarity">
    <text evidence="1">Belongs to the MnmG family.</text>
</comment>
<sequence>MERKYNVAVVGAGHAGCEASLACARMGLKTLIITLNADSMARMPCNPAVGGIAKGQMVREIDAMGGEIGRITDRAVLQFKMLNSSRGPAVWSPRAQCDKELYSVLMSKSVQNQQNLEILQSEATSLTVKNGKVCGVKILTGETIEADAVVITTGTFLKGTIHLGKMHFNGGRFNEVSALYLSKSLIEDCGLKLGRFKTTTTPRINSRSIDYSKMTEQFGDEKPVPFSYSTKVEEWRKNLKQLSCWLTYTNPITHKIVSDNLGLSSIYIGEVNSKSPRYCPSIEEKIERYPEKTSHHVFVEPEGYNTNEVYLNGLYTGLPFNLQQQMINSIVGLENAKVIRYGYAIEYDYSSPLQIKKTLETKTVKNLFLGGQINGTTGYEEAAAQGFVAGVNAGLKVLGKTPFILERNESYIGILVDDITTKGMDEPYRMFTSRAEYRLSIRNDNADLRLMDAGHSIGLISDKAYKKFELYRKAFTDICENNAENLPDDEDLSPWSIEKAKEEVYIHKKYEGYIEIQNKMINKMKKSKDRKIPEDFDYNKLKSLSAETKQRLFEVRPQTIGQASRICAIKPSDIAILTVYLEKQKKERKQKKHNKIK</sequence>
<proteinExistence type="inferred from homology"/>
<dbReference type="EMBL" id="AP009510">
    <property type="protein sequence ID" value="BAG14094.1"/>
    <property type="molecule type" value="Genomic_DNA"/>
</dbReference>
<dbReference type="SMR" id="B1H0R2"/>
<dbReference type="STRING" id="471821.TGRD_611"/>
<dbReference type="KEGG" id="rsd:TGRD_611"/>
<dbReference type="PATRIC" id="fig|471821.5.peg.1019"/>
<dbReference type="HOGENOM" id="CLU_007831_2_2_0"/>
<dbReference type="Proteomes" id="UP000001691">
    <property type="component" value="Chromosome"/>
</dbReference>
<dbReference type="GO" id="GO:0005829">
    <property type="term" value="C:cytosol"/>
    <property type="evidence" value="ECO:0007669"/>
    <property type="project" value="TreeGrafter"/>
</dbReference>
<dbReference type="GO" id="GO:0050660">
    <property type="term" value="F:flavin adenine dinucleotide binding"/>
    <property type="evidence" value="ECO:0007669"/>
    <property type="project" value="UniProtKB-UniRule"/>
</dbReference>
<dbReference type="GO" id="GO:0030488">
    <property type="term" value="P:tRNA methylation"/>
    <property type="evidence" value="ECO:0007669"/>
    <property type="project" value="TreeGrafter"/>
</dbReference>
<dbReference type="GO" id="GO:0002098">
    <property type="term" value="P:tRNA wobble uridine modification"/>
    <property type="evidence" value="ECO:0007669"/>
    <property type="project" value="InterPro"/>
</dbReference>
<dbReference type="FunFam" id="1.10.150.570:FF:000001">
    <property type="entry name" value="tRNA uridine 5-carboxymethylaminomethyl modification enzyme MnmG"/>
    <property type="match status" value="1"/>
</dbReference>
<dbReference type="FunFam" id="3.50.50.60:FF:000002">
    <property type="entry name" value="tRNA uridine 5-carboxymethylaminomethyl modification enzyme MnmG"/>
    <property type="match status" value="1"/>
</dbReference>
<dbReference type="Gene3D" id="3.50.50.60">
    <property type="entry name" value="FAD/NAD(P)-binding domain"/>
    <property type="match status" value="2"/>
</dbReference>
<dbReference type="Gene3D" id="1.10.150.570">
    <property type="entry name" value="GidA associated domain, C-terminal subdomain"/>
    <property type="match status" value="1"/>
</dbReference>
<dbReference type="HAMAP" id="MF_00129">
    <property type="entry name" value="MnmG_GidA"/>
    <property type="match status" value="1"/>
</dbReference>
<dbReference type="InterPro" id="IPR036188">
    <property type="entry name" value="FAD/NAD-bd_sf"/>
</dbReference>
<dbReference type="InterPro" id="IPR004416">
    <property type="entry name" value="MnmG"/>
</dbReference>
<dbReference type="InterPro" id="IPR002218">
    <property type="entry name" value="MnmG-rel"/>
</dbReference>
<dbReference type="InterPro" id="IPR020595">
    <property type="entry name" value="MnmG-rel_CS"/>
</dbReference>
<dbReference type="InterPro" id="IPR026904">
    <property type="entry name" value="MnmG_C"/>
</dbReference>
<dbReference type="InterPro" id="IPR047001">
    <property type="entry name" value="MnmG_C_subdom"/>
</dbReference>
<dbReference type="InterPro" id="IPR044920">
    <property type="entry name" value="MnmG_C_subdom_sf"/>
</dbReference>
<dbReference type="InterPro" id="IPR040131">
    <property type="entry name" value="MnmG_N"/>
</dbReference>
<dbReference type="NCBIfam" id="TIGR00136">
    <property type="entry name" value="mnmG_gidA"/>
    <property type="match status" value="1"/>
</dbReference>
<dbReference type="PANTHER" id="PTHR11806">
    <property type="entry name" value="GLUCOSE INHIBITED DIVISION PROTEIN A"/>
    <property type="match status" value="1"/>
</dbReference>
<dbReference type="PANTHER" id="PTHR11806:SF0">
    <property type="entry name" value="PROTEIN MTO1 HOMOLOG, MITOCHONDRIAL"/>
    <property type="match status" value="1"/>
</dbReference>
<dbReference type="Pfam" id="PF01134">
    <property type="entry name" value="GIDA"/>
    <property type="match status" value="1"/>
</dbReference>
<dbReference type="Pfam" id="PF13932">
    <property type="entry name" value="SAM_GIDA_C"/>
    <property type="match status" value="1"/>
</dbReference>
<dbReference type="SMART" id="SM01228">
    <property type="entry name" value="GIDA_assoc_3"/>
    <property type="match status" value="1"/>
</dbReference>
<dbReference type="SUPFAM" id="SSF51905">
    <property type="entry name" value="FAD/NAD(P)-binding domain"/>
    <property type="match status" value="1"/>
</dbReference>
<dbReference type="PROSITE" id="PS01280">
    <property type="entry name" value="GIDA_1"/>
    <property type="match status" value="1"/>
</dbReference>
<evidence type="ECO:0000255" key="1">
    <source>
        <dbReference type="HAMAP-Rule" id="MF_00129"/>
    </source>
</evidence>
<keyword id="KW-0963">Cytoplasm</keyword>
<keyword id="KW-0274">FAD</keyword>
<keyword id="KW-0285">Flavoprotein</keyword>
<keyword id="KW-0520">NAD</keyword>
<keyword id="KW-0819">tRNA processing</keyword>